<evidence type="ECO:0000250" key="1">
    <source>
        <dbReference type="UniProtKB" id="P02893"/>
    </source>
</evidence>
<evidence type="ECO:0000250" key="2">
    <source>
        <dbReference type="UniProtKB" id="P19597"/>
    </source>
</evidence>
<evidence type="ECO:0000250" key="3">
    <source>
        <dbReference type="UniProtKB" id="P23093"/>
    </source>
</evidence>
<evidence type="ECO:0000250" key="4">
    <source>
        <dbReference type="UniProtKB" id="Q7K740"/>
    </source>
</evidence>
<evidence type="ECO:0000255" key="5"/>
<evidence type="ECO:0000255" key="6">
    <source>
        <dbReference type="PROSITE-ProRule" id="PRU00210"/>
    </source>
</evidence>
<evidence type="ECO:0000256" key="7">
    <source>
        <dbReference type="SAM" id="MobiDB-lite"/>
    </source>
</evidence>
<evidence type="ECO:0000269" key="8">
    <source>
    </source>
</evidence>
<evidence type="ECO:0000303" key="9">
    <source>
    </source>
</evidence>
<evidence type="ECO:0000305" key="10"/>
<evidence type="ECO:0000305" key="11">
    <source>
    </source>
</evidence>
<keyword id="KW-1003">Cell membrane</keyword>
<keyword id="KW-0963">Cytoplasm</keyword>
<keyword id="KW-1015">Disulfide bond</keyword>
<keyword id="KW-0325">Glycoprotein</keyword>
<keyword id="KW-0336">GPI-anchor</keyword>
<keyword id="KW-0449">Lipoprotein</keyword>
<keyword id="KW-0461">Malaria</keyword>
<keyword id="KW-0472">Membrane</keyword>
<keyword id="KW-0677">Repeat</keyword>
<keyword id="KW-0732">Signal</keyword>
<keyword id="KW-0748">Sporozoite</keyword>
<sequence length="429" mass="41596">MKKLSVLAISSFLIVDFLFPGYHHNSNSTKSRNLSELCYNNVDTKLFNELEVRYSTNQDHFYNYNKTIRLLNENNNEKDGNVTNERKKKPTKAVENKLKQPPGDDDGAGNDAGNDAGNDAGNAAGNAAGNAAGNAAGNAAGNAAGNAAGNAAGNAAGNAAGNDAGNAAGNAAGNAAGNAAGNAAGNDAGNAAGNAAGNAAGNAAGNAAGNAAGNAAGNAAGNAAGNAAGNDAGNAAGNAAGNAAGNAAGNAAGNAAGNAAGNAAGNAAGNAAGNAAGNAAGNAAGNAAGNAAGNAAGNAAGNAAGNAAGNAAGNEKAKNKDNKVDANTNKKDNQEENNDSSNGPSEEHIKNYLESIRNSITEEWSPCSVTCGSGIRARRKVGAKNKKPAELVLSDLETEICSLDKCSSIFNVVSNSLGIVLVLVLILFH</sequence>
<protein>
    <recommendedName>
        <fullName evidence="9">Circumsporozoite protein</fullName>
        <shortName evidence="1">CS</shortName>
    </recommendedName>
    <component>
        <recommendedName>
            <fullName evidence="10">Circumsporozoite protein C-terminus</fullName>
        </recommendedName>
    </component>
</protein>
<feature type="signal peptide" evidence="5">
    <location>
        <begin position="1"/>
        <end position="20"/>
    </location>
</feature>
<feature type="chain" id="PRO_0000024532" description="Circumsporozoite protein" evidence="5">
    <location>
        <begin position="21"/>
        <end position="406"/>
    </location>
</feature>
<feature type="chain" id="PRO_0000455499" description="Circumsporozoite protein C-terminus" evidence="3">
    <location>
        <begin status="unknown"/>
        <end position="406"/>
    </location>
</feature>
<feature type="propeptide" id="PRO_0000455500" description="Removed in mature form" evidence="5">
    <location>
        <begin position="407"/>
        <end position="429"/>
    </location>
</feature>
<feature type="repeat" description="1" evidence="11">
    <location>
        <begin position="110"/>
        <end position="113"/>
    </location>
</feature>
<feature type="repeat" description="2" evidence="11">
    <location>
        <begin position="114"/>
        <end position="117"/>
    </location>
</feature>
<feature type="repeat" description="3" evidence="11">
    <location>
        <begin position="118"/>
        <end position="121"/>
    </location>
</feature>
<feature type="repeat" description="4" evidence="11">
    <location>
        <begin position="122"/>
        <end position="125"/>
    </location>
</feature>
<feature type="repeat" description="5" evidence="11">
    <location>
        <begin position="126"/>
        <end position="129"/>
    </location>
</feature>
<feature type="repeat" description="6" evidence="11">
    <location>
        <begin position="130"/>
        <end position="133"/>
    </location>
</feature>
<feature type="repeat" description="7" evidence="11">
    <location>
        <begin position="134"/>
        <end position="137"/>
    </location>
</feature>
<feature type="repeat" description="8" evidence="11">
    <location>
        <begin position="138"/>
        <end position="141"/>
    </location>
</feature>
<feature type="repeat" description="9" evidence="11">
    <location>
        <begin position="142"/>
        <end position="145"/>
    </location>
</feature>
<feature type="repeat" description="10" evidence="11">
    <location>
        <begin position="146"/>
        <end position="149"/>
    </location>
</feature>
<feature type="repeat" description="11" evidence="11">
    <location>
        <begin position="150"/>
        <end position="153"/>
    </location>
</feature>
<feature type="repeat" description="12" evidence="11">
    <location>
        <begin position="154"/>
        <end position="157"/>
    </location>
</feature>
<feature type="repeat" description="13" evidence="11">
    <location>
        <begin position="158"/>
        <end position="161"/>
    </location>
</feature>
<feature type="repeat" description="14" evidence="11">
    <location>
        <begin position="162"/>
        <end position="165"/>
    </location>
</feature>
<feature type="repeat" description="15" evidence="11">
    <location>
        <begin position="166"/>
        <end position="169"/>
    </location>
</feature>
<feature type="repeat" description="16" evidence="11">
    <location>
        <begin position="170"/>
        <end position="173"/>
    </location>
</feature>
<feature type="repeat" description="17" evidence="11">
    <location>
        <begin position="174"/>
        <end position="177"/>
    </location>
</feature>
<feature type="repeat" description="18" evidence="11">
    <location>
        <begin position="178"/>
        <end position="181"/>
    </location>
</feature>
<feature type="repeat" description="20" evidence="11">
    <location>
        <begin position="182"/>
        <end position="185"/>
    </location>
</feature>
<feature type="repeat" description="21" evidence="11">
    <location>
        <begin position="186"/>
        <end position="189"/>
    </location>
</feature>
<feature type="repeat" description="22" evidence="11">
    <location>
        <begin position="190"/>
        <end position="193"/>
    </location>
</feature>
<feature type="repeat" description="23" evidence="11">
    <location>
        <begin position="194"/>
        <end position="197"/>
    </location>
</feature>
<feature type="repeat" description="24" evidence="11">
    <location>
        <begin position="198"/>
        <end position="201"/>
    </location>
</feature>
<feature type="repeat" description="25" evidence="11">
    <location>
        <begin position="202"/>
        <end position="205"/>
    </location>
</feature>
<feature type="repeat" description="26" evidence="11">
    <location>
        <begin position="206"/>
        <end position="209"/>
    </location>
</feature>
<feature type="repeat" description="27" evidence="11">
    <location>
        <begin position="210"/>
        <end position="213"/>
    </location>
</feature>
<feature type="repeat" description="28" evidence="11">
    <location>
        <begin position="214"/>
        <end position="217"/>
    </location>
</feature>
<feature type="repeat" description="29" evidence="11">
    <location>
        <begin position="218"/>
        <end position="221"/>
    </location>
</feature>
<feature type="repeat" description="30" evidence="11">
    <location>
        <begin position="222"/>
        <end position="225"/>
    </location>
</feature>
<feature type="repeat" description="31" evidence="11">
    <location>
        <begin position="226"/>
        <end position="229"/>
    </location>
</feature>
<feature type="repeat" description="32" evidence="11">
    <location>
        <begin position="230"/>
        <end position="233"/>
    </location>
</feature>
<feature type="repeat" description="33" evidence="11">
    <location>
        <begin position="234"/>
        <end position="237"/>
    </location>
</feature>
<feature type="repeat" description="34" evidence="11">
    <location>
        <begin position="238"/>
        <end position="241"/>
    </location>
</feature>
<feature type="repeat" description="35" evidence="11">
    <location>
        <begin position="242"/>
        <end position="245"/>
    </location>
</feature>
<feature type="repeat" description="36" evidence="11">
    <location>
        <begin position="246"/>
        <end position="249"/>
    </location>
</feature>
<feature type="repeat" description="37" evidence="11">
    <location>
        <begin position="250"/>
        <end position="253"/>
    </location>
</feature>
<feature type="repeat" description="38" evidence="11">
    <location>
        <begin position="254"/>
        <end position="257"/>
    </location>
</feature>
<feature type="repeat" description="39" evidence="11">
    <location>
        <begin position="258"/>
        <end position="261"/>
    </location>
</feature>
<feature type="repeat" description="40" evidence="11">
    <location>
        <begin position="262"/>
        <end position="265"/>
    </location>
</feature>
<feature type="repeat" description="41" evidence="11">
    <location>
        <begin position="266"/>
        <end position="269"/>
    </location>
</feature>
<feature type="repeat" description="42" evidence="11">
    <location>
        <begin position="270"/>
        <end position="273"/>
    </location>
</feature>
<feature type="repeat" description="43" evidence="11">
    <location>
        <begin position="274"/>
        <end position="277"/>
    </location>
</feature>
<feature type="repeat" description="44" evidence="11">
    <location>
        <begin position="278"/>
        <end position="281"/>
    </location>
</feature>
<feature type="repeat" description="45" evidence="11">
    <location>
        <begin position="282"/>
        <end position="285"/>
    </location>
</feature>
<feature type="repeat" description="46" evidence="11">
    <location>
        <begin position="286"/>
        <end position="289"/>
    </location>
</feature>
<feature type="repeat" description="47" evidence="11">
    <location>
        <begin position="290"/>
        <end position="293"/>
    </location>
</feature>
<feature type="repeat" description="48" evidence="11">
    <location>
        <begin position="294"/>
        <end position="297"/>
    </location>
</feature>
<feature type="repeat" description="49" evidence="11">
    <location>
        <begin position="298"/>
        <end position="301"/>
    </location>
</feature>
<feature type="repeat" description="50" evidence="11">
    <location>
        <begin position="302"/>
        <end position="305"/>
    </location>
</feature>
<feature type="repeat" description="51" evidence="11">
    <location>
        <begin position="306"/>
        <end position="309"/>
    </location>
</feature>
<feature type="repeat" description="52" evidence="11">
    <location>
        <begin position="310"/>
        <end position="313"/>
    </location>
</feature>
<feature type="domain" description="TSP type-1" evidence="6">
    <location>
        <begin position="355"/>
        <end position="407"/>
    </location>
</feature>
<feature type="region of interest" description="Disordered" evidence="7">
    <location>
        <begin position="72"/>
        <end position="121"/>
    </location>
</feature>
<feature type="region of interest" description="Required for the binding to heparan sulfate proteoglycans (HSPGs) on the surface of host hepatocytes" evidence="4">
    <location>
        <begin position="87"/>
        <end position="92"/>
    </location>
</feature>
<feature type="region of interest" description="Region I; contains the proteolytic cleavage site" evidence="3">
    <location>
        <begin position="97"/>
        <end position="101"/>
    </location>
</feature>
<feature type="region of interest" description="52 X 4 AA tandem repeats of N-[AD]-A-G" evidence="11">
    <location>
        <begin position="110"/>
        <end position="313"/>
    </location>
</feature>
<feature type="region of interest" description="Disordered" evidence="7">
    <location>
        <begin position="307"/>
        <end position="347"/>
    </location>
</feature>
<feature type="compositionally biased region" description="Low complexity" evidence="7">
    <location>
        <begin position="109"/>
        <end position="121"/>
    </location>
</feature>
<feature type="compositionally biased region" description="Basic and acidic residues" evidence="7">
    <location>
        <begin position="315"/>
        <end position="334"/>
    </location>
</feature>
<feature type="lipid moiety-binding region" description="GPI-anchor amidated cysteine" evidence="5">
    <location>
        <position position="406"/>
    </location>
</feature>
<feature type="glycosylation site" description="O-linked (Fuc) threonine" evidence="2">
    <location>
        <position position="370"/>
    </location>
</feature>
<feature type="disulfide bond" evidence="4">
    <location>
        <begin position="367"/>
        <end position="401"/>
    </location>
</feature>
<feature type="disulfide bond" evidence="4">
    <location>
        <begin position="371"/>
        <end position="406"/>
    </location>
</feature>
<name>CSP_PLAMA</name>
<accession>P13815</accession>
<gene>
    <name evidence="9" type="primary">CSP</name>
</gene>
<organism>
    <name type="scientific">Plasmodium malariae</name>
    <dbReference type="NCBI Taxonomy" id="5858"/>
    <lineage>
        <taxon>Eukaryota</taxon>
        <taxon>Sar</taxon>
        <taxon>Alveolata</taxon>
        <taxon>Apicomplexa</taxon>
        <taxon>Aconoidasida</taxon>
        <taxon>Haemosporida</taxon>
        <taxon>Plasmodiidae</taxon>
        <taxon>Plasmodium</taxon>
        <taxon>Plasmodium (Plasmodium)</taxon>
    </lineage>
</organism>
<comment type="function">
    <text evidence="1 3">Essential sporozoite protein (By similarity). In the mosquito vector, required for sporozoite development in the oocyst, migration through the vector hemolymph and entry into the vector salivary glands (By similarity). In the vertebrate host, required for sporozoite migration through the host dermis and infection of host hepatocytes (By similarity). Binds to highly sulfated heparan sulfate proteoglycans (HSPGs) on the surface of host hepatocytes (By similarity).</text>
</comment>
<comment type="function">
    <molecule>Circumsporozoite protein C-terminus</molecule>
    <text evidence="3">In the vertebrate host, binds to highly sulfated heparan sulfate proteoglycans (HSPGs) on the surface of host hepatocytes and is required for sporozoite invasion of the host hepatocytes.</text>
</comment>
<comment type="subcellular location">
    <subcellularLocation>
        <location evidence="2">Cell membrane</location>
        <topology evidence="5">Lipid-anchor</topology>
        <topology evidence="5">GPI-anchor</topology>
    </subcellularLocation>
    <subcellularLocation>
        <location evidence="3">Cytoplasm</location>
    </subcellularLocation>
    <text evidence="3">Localizes to the cytoplasm and the cell membrane in oocysts at day 6 post infection and then gradually distributes over the entire cell surface of the sporoblast and the budding sporozoites.</text>
</comment>
<comment type="domain">
    <text evidence="3 4">The N-terminus is involved in the initial binding to heparan sulfate proteoglycans (HSPGs) on the surface of host hepatocytes (By similarity). The N-terminus masks the TSP type-1 (TSR) domain which maintains the sporozoites in a migratory state, enabling them to complete their journey to the salivary gland in the mosquito vector and then to the host liver. The unmasking of the TSP type-1 (TSR) domain when the sporozoite interacts with the host hepatocyte also protects sporozoites from host antibodies (By similarity).</text>
</comment>
<comment type="domain">
    <text evidence="3">The TSP type-1 (TSR) domain is required for sporozoite development and invasion. CSP has two conformational states, an adhesive conformation in which the TSP type-1 (TSR) domain is exposed and a nonadhesive conformation in which the TSR is masked by the N-terminus. TSR-exposed conformation occurs during sporozoite development in the oocyst in the mosquito vector and during host hepatocyte invasion. TSR-masked conformation occurs during sporozoite migration through the hemolymph to salivary glands in the mosquito vector and in the host dermis.</text>
</comment>
<comment type="domain">
    <text evidence="3">The GPI-anchor is essential for cell membrane localization and for sporozoite formation inside the oocyst.</text>
</comment>
<comment type="PTM">
    <text evidence="1 3">During host cell invasion, proteolytically cleaved at the cell membrane in the region I by a papain-like cysteine protease of parasite origin (By similarity). Cleavage is triggered by the sporozoite contact with highly sulfated heparan sulfate proteoglycans (HSPGs) present on the host hepatocyte cell surface (By similarity). Cleavage exposes the TSP type-1 (TSR) domain and is required for productive invasion of host hepatocytes but not for adhesion to the host cell membrane (By similarity). Cleavage is dispensable for sporozoite development in the oocyst, motility and for traversal of host and vector cells (By similarity).</text>
</comment>
<comment type="PTM">
    <text evidence="2">O-glycosylated; maybe by POFUT2.</text>
</comment>
<comment type="polymorphism">
    <text evidence="8">The sequence of the repeats varies across Plasmodium species and strains.</text>
</comment>
<comment type="similarity">
    <text evidence="10">Belongs to the plasmodium circumsporozoite protein family.</text>
</comment>
<proteinExistence type="inferred from homology"/>
<reference key="1">
    <citation type="journal article" date="1988" name="Mol. Biochem. Parasitol.">
        <title>Structure of the circumsporozoite gene of Plasmodium malariae.</title>
        <authorList>
            <person name="Lal A.A."/>
            <person name="la Cruz V.F."/>
            <person name="Campbell G.H."/>
            <person name="Procell P.M."/>
            <person name="Collins W.E."/>
            <person name="McCutchan T.F."/>
        </authorList>
    </citation>
    <scope>NUCLEOTIDE SEQUENCE [GENOMIC DNA]</scope>
    <scope>POLYMORPHISM</scope>
    <scope>REPEATS</scope>
</reference>
<dbReference type="EMBL" id="J03992">
    <property type="protein sequence ID" value="AAA29557.1"/>
    <property type="molecule type" value="Genomic_DNA"/>
</dbReference>
<dbReference type="PIR" id="A54504">
    <property type="entry name" value="A54504"/>
</dbReference>
<dbReference type="SMR" id="P13815"/>
<dbReference type="GlyCosmos" id="P13815">
    <property type="glycosylation" value="1 site, No reported glycans"/>
</dbReference>
<dbReference type="VEuPathDB" id="PlasmoDB:PmUG01_08051600"/>
<dbReference type="GO" id="GO:0009986">
    <property type="term" value="C:cell surface"/>
    <property type="evidence" value="ECO:0007669"/>
    <property type="project" value="InterPro"/>
</dbReference>
<dbReference type="GO" id="GO:0005737">
    <property type="term" value="C:cytoplasm"/>
    <property type="evidence" value="ECO:0007669"/>
    <property type="project" value="UniProtKB-SubCell"/>
</dbReference>
<dbReference type="GO" id="GO:0005886">
    <property type="term" value="C:plasma membrane"/>
    <property type="evidence" value="ECO:0007669"/>
    <property type="project" value="UniProtKB-SubCell"/>
</dbReference>
<dbReference type="GO" id="GO:0098552">
    <property type="term" value="C:side of membrane"/>
    <property type="evidence" value="ECO:0007669"/>
    <property type="project" value="UniProtKB-KW"/>
</dbReference>
<dbReference type="Gene3D" id="2.20.100.10">
    <property type="entry name" value="Thrombospondin type-1 (TSP1) repeat"/>
    <property type="match status" value="1"/>
</dbReference>
<dbReference type="InterPro" id="IPR003067">
    <property type="entry name" value="Crcmsprzoite"/>
</dbReference>
<dbReference type="InterPro" id="IPR000884">
    <property type="entry name" value="TSP1_rpt"/>
</dbReference>
<dbReference type="InterPro" id="IPR036383">
    <property type="entry name" value="TSP1_rpt_sf"/>
</dbReference>
<dbReference type="Pfam" id="PF00090">
    <property type="entry name" value="TSP_1"/>
    <property type="match status" value="1"/>
</dbReference>
<dbReference type="PRINTS" id="PR01303">
    <property type="entry name" value="CRCMSPRZOITE"/>
</dbReference>
<dbReference type="SMART" id="SM00209">
    <property type="entry name" value="TSP1"/>
    <property type="match status" value="1"/>
</dbReference>
<dbReference type="SUPFAM" id="SSF82895">
    <property type="entry name" value="TSP-1 type 1 repeat"/>
    <property type="match status" value="1"/>
</dbReference>
<dbReference type="PROSITE" id="PS50092">
    <property type="entry name" value="TSP1"/>
    <property type="match status" value="1"/>
</dbReference>